<protein>
    <recommendedName>
        <fullName>U6 snRNA-associated Sm-like protein LSm6</fullName>
    </recommendedName>
</protein>
<gene>
    <name type="primary">LSM6</name>
    <name type="ORF">HCAG_04071</name>
</gene>
<name>LSM6_AJECN</name>
<feature type="chain" id="PRO_0000333586" description="U6 snRNA-associated Sm-like protein LSm6">
    <location>
        <begin position="1"/>
        <end position="80"/>
    </location>
</feature>
<feature type="domain" description="Sm" evidence="2">
    <location>
        <begin position="11"/>
        <end position="80"/>
    </location>
</feature>
<accession>A6R363</accession>
<reference key="1">
    <citation type="journal article" date="2009" name="Genome Res.">
        <title>Comparative genomic analyses of the human fungal pathogens Coccidioides and their relatives.</title>
        <authorList>
            <person name="Sharpton T.J."/>
            <person name="Stajich J.E."/>
            <person name="Rounsley S.D."/>
            <person name="Gardner M.J."/>
            <person name="Wortman J.R."/>
            <person name="Jordar V.S."/>
            <person name="Maiti R."/>
            <person name="Kodira C.D."/>
            <person name="Neafsey D.E."/>
            <person name="Zeng Q."/>
            <person name="Hung C.-Y."/>
            <person name="McMahan C."/>
            <person name="Muszewska A."/>
            <person name="Grynberg M."/>
            <person name="Mandel M.A."/>
            <person name="Kellner E.M."/>
            <person name="Barker B.M."/>
            <person name="Galgiani J.N."/>
            <person name="Orbach M.J."/>
            <person name="Kirkland T.N."/>
            <person name="Cole G.T."/>
            <person name="Henn M.R."/>
            <person name="Birren B.W."/>
            <person name="Taylor J.W."/>
        </authorList>
    </citation>
    <scope>NUCLEOTIDE SEQUENCE [LARGE SCALE GENOMIC DNA]</scope>
    <source>
        <strain>NAm1 / WU24</strain>
    </source>
</reference>
<proteinExistence type="inferred from homology"/>
<comment type="function">
    <text evidence="1">Component of LSm protein complexes, which are involved in RNA processing and may function in a chaperone-like manner, facilitating the efficient association of RNA processing factors with their substrates. Component of the cytoplasmic LSM1-LSM7 complex, which is thought to be involved in mRNA degradation by activating the decapping step in the 5'-to-3' mRNA decay pathway. Component of the nuclear LSM2-LSM8 complex, which is involved in splicing of nuclear mRNAs. LSM2-LSM8 associates with multiple snRNP complexes containing the U6 snRNA (U4/U6 di-snRNP, spliceosomal U4/U6.U5 tri-snRNP, and free U6 snRNP). It binds directly to the 3'-terminal U-tract of U6 snRNA and plays a role in the biogenesis and stability of the U6 snRNP and U4/U6 snRNP complexes. LSM2-LSM8 probably also is involved degradation of nuclear pre-mRNA by targeting them for decapping, and in processing of pre-tRNAs, pre-rRNAs and U3 snoRNA (By similarity).</text>
</comment>
<comment type="subunit">
    <text evidence="1">Component of the heptameric LSM1-LSM7 complex, which consists of LSM1, LSM2, LSM3, LSM4, LSM5, LSM6 and LSM7. Component of the heptameric LSM2-LSM8 complex, which consists of LSM2, LSM3, LSM4, LSM5, LSM6, LSM7 and LSM8. The LSm subunits form a seven-membered ring structure with a doughnut shape (By similarity).</text>
</comment>
<comment type="subcellular location">
    <subcellularLocation>
        <location evidence="1">Cytoplasm</location>
    </subcellularLocation>
    <subcellularLocation>
        <location evidence="1">Nucleus</location>
    </subcellularLocation>
</comment>
<comment type="similarity">
    <text evidence="3">Belongs to the snRNP Sm proteins family. SmF/LSm6 subfamily.</text>
</comment>
<organism>
    <name type="scientific">Ajellomyces capsulatus (strain NAm1 / WU24)</name>
    <name type="common">Darling's disease fungus</name>
    <name type="synonym">Histoplasma capsulatum</name>
    <dbReference type="NCBI Taxonomy" id="2059318"/>
    <lineage>
        <taxon>Eukaryota</taxon>
        <taxon>Fungi</taxon>
        <taxon>Dikarya</taxon>
        <taxon>Ascomycota</taxon>
        <taxon>Pezizomycotina</taxon>
        <taxon>Eurotiomycetes</taxon>
        <taxon>Eurotiomycetidae</taxon>
        <taxon>Onygenales</taxon>
        <taxon>Ajellomycetaceae</taxon>
        <taxon>Histoplasma</taxon>
    </lineage>
</organism>
<keyword id="KW-0963">Cytoplasm</keyword>
<keyword id="KW-0507">mRNA processing</keyword>
<keyword id="KW-0508">mRNA splicing</keyword>
<keyword id="KW-0539">Nucleus</keyword>
<keyword id="KW-1185">Reference proteome</keyword>
<keyword id="KW-0687">Ribonucleoprotein</keyword>
<keyword id="KW-0694">RNA-binding</keyword>
<keyword id="KW-0698">rRNA processing</keyword>
<keyword id="KW-0747">Spliceosome</keyword>
<keyword id="KW-0819">tRNA processing</keyword>
<evidence type="ECO:0000250" key="1"/>
<evidence type="ECO:0000255" key="2">
    <source>
        <dbReference type="PROSITE-ProRule" id="PRU01346"/>
    </source>
</evidence>
<evidence type="ECO:0000305" key="3"/>
<sequence>MENGSASEGKDPSAFLSEITGAPVTVKLNSGVVYKGELQSVDGYMNIALEKTEEYVDGKLRRSYGDAFVRGNNVLYISAD</sequence>
<dbReference type="EMBL" id="CH476658">
    <property type="protein sequence ID" value="EDN07561.1"/>
    <property type="molecule type" value="Genomic_DNA"/>
</dbReference>
<dbReference type="SMR" id="A6R363"/>
<dbReference type="STRING" id="339724.A6R363"/>
<dbReference type="KEGG" id="aje:HCAG_04071"/>
<dbReference type="VEuPathDB" id="FungiDB:HCAG_04071"/>
<dbReference type="HOGENOM" id="CLU_076902_7_4_1"/>
<dbReference type="OMA" id="EQTVEYV"/>
<dbReference type="OrthoDB" id="1140at299071"/>
<dbReference type="Proteomes" id="UP000009297">
    <property type="component" value="Unassembled WGS sequence"/>
</dbReference>
<dbReference type="GO" id="GO:0005730">
    <property type="term" value="C:nucleolus"/>
    <property type="evidence" value="ECO:0007669"/>
    <property type="project" value="TreeGrafter"/>
</dbReference>
<dbReference type="GO" id="GO:0000932">
    <property type="term" value="C:P-body"/>
    <property type="evidence" value="ECO:0007669"/>
    <property type="project" value="TreeGrafter"/>
</dbReference>
<dbReference type="GO" id="GO:0005732">
    <property type="term" value="C:sno(s)RNA-containing ribonucleoprotein complex"/>
    <property type="evidence" value="ECO:0007669"/>
    <property type="project" value="TreeGrafter"/>
</dbReference>
<dbReference type="GO" id="GO:0005681">
    <property type="term" value="C:spliceosomal complex"/>
    <property type="evidence" value="ECO:0007669"/>
    <property type="project" value="UniProtKB-KW"/>
</dbReference>
<dbReference type="GO" id="GO:0046540">
    <property type="term" value="C:U4/U6 x U5 tri-snRNP complex"/>
    <property type="evidence" value="ECO:0007669"/>
    <property type="project" value="TreeGrafter"/>
</dbReference>
<dbReference type="GO" id="GO:0005688">
    <property type="term" value="C:U6 snRNP"/>
    <property type="evidence" value="ECO:0007669"/>
    <property type="project" value="TreeGrafter"/>
</dbReference>
<dbReference type="GO" id="GO:0003723">
    <property type="term" value="F:RNA binding"/>
    <property type="evidence" value="ECO:0007669"/>
    <property type="project" value="UniProtKB-KW"/>
</dbReference>
<dbReference type="GO" id="GO:0030490">
    <property type="term" value="P:maturation of SSU-rRNA"/>
    <property type="evidence" value="ECO:0007669"/>
    <property type="project" value="TreeGrafter"/>
</dbReference>
<dbReference type="GO" id="GO:0000398">
    <property type="term" value="P:mRNA splicing, via spliceosome"/>
    <property type="evidence" value="ECO:0007669"/>
    <property type="project" value="InterPro"/>
</dbReference>
<dbReference type="GO" id="GO:0008033">
    <property type="term" value="P:tRNA processing"/>
    <property type="evidence" value="ECO:0007669"/>
    <property type="project" value="UniProtKB-KW"/>
</dbReference>
<dbReference type="CDD" id="cd01726">
    <property type="entry name" value="LSm6"/>
    <property type="match status" value="1"/>
</dbReference>
<dbReference type="FunFam" id="2.30.30.100:FF:000037">
    <property type="entry name" value="U6 snRNA-associated Sm-like protein LSm6"/>
    <property type="match status" value="1"/>
</dbReference>
<dbReference type="Gene3D" id="2.30.30.100">
    <property type="match status" value="1"/>
</dbReference>
<dbReference type="InterPro" id="IPR016487">
    <property type="entry name" value="Lsm6/sSmF"/>
</dbReference>
<dbReference type="InterPro" id="IPR010920">
    <property type="entry name" value="LSM_dom_sf"/>
</dbReference>
<dbReference type="InterPro" id="IPR047575">
    <property type="entry name" value="Sm"/>
</dbReference>
<dbReference type="InterPro" id="IPR001163">
    <property type="entry name" value="Sm_dom_euk/arc"/>
</dbReference>
<dbReference type="PANTHER" id="PTHR11021">
    <property type="entry name" value="SMALL NUCLEAR RIBONUCLEOPROTEIN F SNRNP-F"/>
    <property type="match status" value="1"/>
</dbReference>
<dbReference type="PANTHER" id="PTHR11021:SF1">
    <property type="entry name" value="U6 SNRNA-ASSOCIATED SM-LIKE PROTEIN LSM6"/>
    <property type="match status" value="1"/>
</dbReference>
<dbReference type="Pfam" id="PF01423">
    <property type="entry name" value="LSM"/>
    <property type="match status" value="1"/>
</dbReference>
<dbReference type="PIRSF" id="PIRSF006609">
    <property type="entry name" value="snRNP_SmF"/>
    <property type="match status" value="1"/>
</dbReference>
<dbReference type="SMART" id="SM00651">
    <property type="entry name" value="Sm"/>
    <property type="match status" value="1"/>
</dbReference>
<dbReference type="SUPFAM" id="SSF50182">
    <property type="entry name" value="Sm-like ribonucleoproteins"/>
    <property type="match status" value="1"/>
</dbReference>
<dbReference type="PROSITE" id="PS52002">
    <property type="entry name" value="SM"/>
    <property type="match status" value="1"/>
</dbReference>